<name>H4_PYRSA</name>
<accession>Q43083</accession>
<organism>
    <name type="scientific">Pyrenomonas salina</name>
    <dbReference type="NCBI Taxonomy" id="3034"/>
    <lineage>
        <taxon>Eukaryota</taxon>
        <taxon>Cryptophyceae</taxon>
        <taxon>Pyrenomonadales</taxon>
        <taxon>Pyrenomonadaceae</taxon>
        <taxon>Pyrenomonas</taxon>
    </lineage>
</organism>
<reference key="1">
    <citation type="journal article" date="1994" name="Gene">
        <title>The crytomonad histone H4-encoding gene: structure and chromosomal localization.</title>
        <authorList>
            <person name="Mueller S.B."/>
            <person name="Rensing S.A."/>
            <person name="Maier U.-G."/>
        </authorList>
    </citation>
    <scope>NUCLEOTIDE SEQUENCE [GENOMIC DNA]</scope>
</reference>
<feature type="initiator methionine" description="Removed" evidence="1">
    <location>
        <position position="1"/>
    </location>
</feature>
<feature type="chain" id="PRO_0000158354" description="Histone H4">
    <location>
        <begin position="2"/>
        <end position="103"/>
    </location>
</feature>
<feature type="DNA-binding region">
    <location>
        <begin position="17"/>
        <end position="21"/>
    </location>
</feature>
<feature type="region of interest" description="Disordered" evidence="2">
    <location>
        <begin position="1"/>
        <end position="20"/>
    </location>
</feature>
<feature type="compositionally biased region" description="Gly residues" evidence="2">
    <location>
        <begin position="1"/>
        <end position="14"/>
    </location>
</feature>
<feature type="modified residue" description="N-acetylserine" evidence="1">
    <location>
        <position position="2"/>
    </location>
</feature>
<feature type="modified residue" description="N6-acetyllysine" evidence="1">
    <location>
        <position position="17"/>
    </location>
</feature>
<feature type="modified residue" description="N6-methyllysine" evidence="1">
    <location>
        <position position="21"/>
    </location>
</feature>
<comment type="function">
    <text>Core component of nucleosome. Nucleosomes wrap and compact DNA into chromatin, limiting DNA accessibility to the cellular machineries which require DNA as a template. Histones thereby play a central role in transcription regulation, DNA repair, DNA replication and chromosomal stability. DNA accessibility is regulated via a complex set of post-translational modifications of histones, also called histone code, and nucleosome remodeling.</text>
</comment>
<comment type="subunit">
    <text>The nucleosome is a histone octamer containing two molecules each of H2A, H2B, H3 and H4 assembled in one H3-H4 heterotetramer and two H2A-H2B heterodimers. The octamer wraps approximately 147 bp of DNA.</text>
</comment>
<comment type="subcellular location">
    <subcellularLocation>
        <location evidence="1">Nucleus</location>
    </subcellularLocation>
    <subcellularLocation>
        <location evidence="1">Chromosome</location>
    </subcellularLocation>
</comment>
<comment type="similarity">
    <text evidence="3">Belongs to the histone H4 family.</text>
</comment>
<dbReference type="EMBL" id="X77806">
    <property type="protein sequence ID" value="CAA54829.1"/>
    <property type="molecule type" value="Genomic_DNA"/>
</dbReference>
<dbReference type="SMR" id="Q43083"/>
<dbReference type="GO" id="GO:0000786">
    <property type="term" value="C:nucleosome"/>
    <property type="evidence" value="ECO:0007669"/>
    <property type="project" value="UniProtKB-KW"/>
</dbReference>
<dbReference type="GO" id="GO:0005634">
    <property type="term" value="C:nucleus"/>
    <property type="evidence" value="ECO:0007669"/>
    <property type="project" value="UniProtKB-SubCell"/>
</dbReference>
<dbReference type="GO" id="GO:0003677">
    <property type="term" value="F:DNA binding"/>
    <property type="evidence" value="ECO:0007669"/>
    <property type="project" value="UniProtKB-KW"/>
</dbReference>
<dbReference type="GO" id="GO:0046982">
    <property type="term" value="F:protein heterodimerization activity"/>
    <property type="evidence" value="ECO:0007669"/>
    <property type="project" value="InterPro"/>
</dbReference>
<dbReference type="GO" id="GO:0030527">
    <property type="term" value="F:structural constituent of chromatin"/>
    <property type="evidence" value="ECO:0007669"/>
    <property type="project" value="InterPro"/>
</dbReference>
<dbReference type="CDD" id="cd22912">
    <property type="entry name" value="HFD_H4"/>
    <property type="match status" value="1"/>
</dbReference>
<dbReference type="FunFam" id="1.10.20.10:FF:000002">
    <property type="entry name" value="Histone H4"/>
    <property type="match status" value="1"/>
</dbReference>
<dbReference type="Gene3D" id="1.10.20.10">
    <property type="entry name" value="Histone, subunit A"/>
    <property type="match status" value="1"/>
</dbReference>
<dbReference type="InterPro" id="IPR035425">
    <property type="entry name" value="CENP-T/H4_C"/>
</dbReference>
<dbReference type="InterPro" id="IPR009072">
    <property type="entry name" value="Histone-fold"/>
</dbReference>
<dbReference type="InterPro" id="IPR001951">
    <property type="entry name" value="Histone_H4"/>
</dbReference>
<dbReference type="InterPro" id="IPR019809">
    <property type="entry name" value="Histone_H4_CS"/>
</dbReference>
<dbReference type="PANTHER" id="PTHR10484">
    <property type="entry name" value="HISTONE H4"/>
    <property type="match status" value="1"/>
</dbReference>
<dbReference type="Pfam" id="PF15511">
    <property type="entry name" value="CENP-T_C"/>
    <property type="match status" value="1"/>
</dbReference>
<dbReference type="PRINTS" id="PR00623">
    <property type="entry name" value="HISTONEH4"/>
</dbReference>
<dbReference type="SMART" id="SM00417">
    <property type="entry name" value="H4"/>
    <property type="match status" value="1"/>
</dbReference>
<dbReference type="SUPFAM" id="SSF47113">
    <property type="entry name" value="Histone-fold"/>
    <property type="match status" value="1"/>
</dbReference>
<dbReference type="PROSITE" id="PS00047">
    <property type="entry name" value="HISTONE_H4"/>
    <property type="match status" value="1"/>
</dbReference>
<keyword id="KW-0007">Acetylation</keyword>
<keyword id="KW-0158">Chromosome</keyword>
<keyword id="KW-0238">DNA-binding</keyword>
<keyword id="KW-0488">Methylation</keyword>
<keyword id="KW-0544">Nucleosome core</keyword>
<keyword id="KW-0539">Nucleus</keyword>
<sequence length="103" mass="11425">MSGRGKGGKGLGKGGAKRHRKVLRDNIQGITKPAIRRLARRGGVKRISGLIYEETRSVLKVFLENVIRDAVTYTEHARRKTVTAMDVVYALKRQGRTLYGFGG</sequence>
<protein>
    <recommendedName>
        <fullName>Histone H4</fullName>
    </recommendedName>
</protein>
<proteinExistence type="inferred from homology"/>
<evidence type="ECO:0000250" key="1"/>
<evidence type="ECO:0000256" key="2">
    <source>
        <dbReference type="SAM" id="MobiDB-lite"/>
    </source>
</evidence>
<evidence type="ECO:0000305" key="3"/>